<sequence>MKPTSQYPQAVPNPPKNSLSDDTLVISSEFIQRLAVLTRKLGYVFNDLSLAKLALTHRSFDSKKNYERLEFLGDALLGMIVGEALYHRYPTQNEGRLTRMRATLVRQESLVIIAQNLELSNQLILGVGERKGGGRNRASILADAVESLIGAIYLDSQDMNITRECVLSWYGDLIDNVNDQKALKDAKSRLQEWLQSKQFDLPHYELMETRGNAPHQLFVVRCQVNIINCPDITESGESRRIAEQKAAELMINQLHKLPGVPKKRR</sequence>
<keyword id="KW-0963">Cytoplasm</keyword>
<keyword id="KW-0255">Endonuclease</keyword>
<keyword id="KW-0378">Hydrolase</keyword>
<keyword id="KW-0460">Magnesium</keyword>
<keyword id="KW-0479">Metal-binding</keyword>
<keyword id="KW-0507">mRNA processing</keyword>
<keyword id="KW-0540">Nuclease</keyword>
<keyword id="KW-1185">Reference proteome</keyword>
<keyword id="KW-0694">RNA-binding</keyword>
<keyword id="KW-0698">rRNA processing</keyword>
<keyword id="KW-0699">rRNA-binding</keyword>
<keyword id="KW-0819">tRNA processing</keyword>
<feature type="chain" id="PRO_0000228570" description="Ribonuclease 3">
    <location>
        <begin position="1"/>
        <end position="265"/>
    </location>
</feature>
<feature type="domain" description="RNase III" evidence="1">
    <location>
        <begin position="34"/>
        <end position="157"/>
    </location>
</feature>
<feature type="domain" description="DRBM" evidence="1">
    <location>
        <begin position="185"/>
        <end position="256"/>
    </location>
</feature>
<feature type="active site" evidence="1">
    <location>
        <position position="74"/>
    </location>
</feature>
<feature type="active site" evidence="1">
    <location>
        <position position="146"/>
    </location>
</feature>
<feature type="binding site" evidence="1">
    <location>
        <position position="70"/>
    </location>
    <ligand>
        <name>Mg(2+)</name>
        <dbReference type="ChEBI" id="CHEBI:18420"/>
    </ligand>
</feature>
<feature type="binding site" evidence="1">
    <location>
        <position position="143"/>
    </location>
    <ligand>
        <name>Mg(2+)</name>
        <dbReference type="ChEBI" id="CHEBI:18420"/>
    </ligand>
</feature>
<feature type="binding site" evidence="1">
    <location>
        <position position="146"/>
    </location>
    <ligand>
        <name>Mg(2+)</name>
        <dbReference type="ChEBI" id="CHEBI:18420"/>
    </ligand>
</feature>
<reference key="1">
    <citation type="journal article" date="2010" name="Appl. Environ. Microbiol.">
        <title>The genome sequence of Psychrobacter arcticus 273-4, a psychroactive Siberian permafrost bacterium, reveals mechanisms for adaptation to low-temperature growth.</title>
        <authorList>
            <person name="Ayala-del-Rio H.L."/>
            <person name="Chain P.S."/>
            <person name="Grzymski J.J."/>
            <person name="Ponder M.A."/>
            <person name="Ivanova N."/>
            <person name="Bergholz P.W."/>
            <person name="Di Bartolo G."/>
            <person name="Hauser L."/>
            <person name="Land M."/>
            <person name="Bakermans C."/>
            <person name="Rodrigues D."/>
            <person name="Klappenbach J."/>
            <person name="Zarka D."/>
            <person name="Larimer F."/>
            <person name="Richardson P."/>
            <person name="Murray A."/>
            <person name="Thomashow M."/>
            <person name="Tiedje J.M."/>
        </authorList>
    </citation>
    <scope>NUCLEOTIDE SEQUENCE [LARGE SCALE GENOMIC DNA]</scope>
    <source>
        <strain>DSM 17307 / VKM B-2377 / 273-4</strain>
    </source>
</reference>
<accession>Q4FUV6</accession>
<dbReference type="EC" id="3.1.26.3" evidence="1"/>
<dbReference type="EMBL" id="CP000082">
    <property type="protein sequence ID" value="AAZ18202.1"/>
    <property type="molecule type" value="Genomic_DNA"/>
</dbReference>
<dbReference type="RefSeq" id="WP_011279640.1">
    <property type="nucleotide sequence ID" value="NC_007204.1"/>
</dbReference>
<dbReference type="SMR" id="Q4FUV6"/>
<dbReference type="STRING" id="259536.Psyc_0333"/>
<dbReference type="KEGG" id="par:Psyc_0333"/>
<dbReference type="eggNOG" id="COG0571">
    <property type="taxonomic scope" value="Bacteria"/>
</dbReference>
<dbReference type="HOGENOM" id="CLU_000907_1_1_6"/>
<dbReference type="OrthoDB" id="9805026at2"/>
<dbReference type="Proteomes" id="UP000000546">
    <property type="component" value="Chromosome"/>
</dbReference>
<dbReference type="GO" id="GO:0005737">
    <property type="term" value="C:cytoplasm"/>
    <property type="evidence" value="ECO:0007669"/>
    <property type="project" value="UniProtKB-SubCell"/>
</dbReference>
<dbReference type="GO" id="GO:0046872">
    <property type="term" value="F:metal ion binding"/>
    <property type="evidence" value="ECO:0007669"/>
    <property type="project" value="UniProtKB-KW"/>
</dbReference>
<dbReference type="GO" id="GO:0004525">
    <property type="term" value="F:ribonuclease III activity"/>
    <property type="evidence" value="ECO:0007669"/>
    <property type="project" value="UniProtKB-UniRule"/>
</dbReference>
<dbReference type="GO" id="GO:0019843">
    <property type="term" value="F:rRNA binding"/>
    <property type="evidence" value="ECO:0007669"/>
    <property type="project" value="UniProtKB-KW"/>
</dbReference>
<dbReference type="GO" id="GO:0006397">
    <property type="term" value="P:mRNA processing"/>
    <property type="evidence" value="ECO:0007669"/>
    <property type="project" value="UniProtKB-UniRule"/>
</dbReference>
<dbReference type="GO" id="GO:0006364">
    <property type="term" value="P:rRNA processing"/>
    <property type="evidence" value="ECO:0007669"/>
    <property type="project" value="UniProtKB-UniRule"/>
</dbReference>
<dbReference type="GO" id="GO:0008033">
    <property type="term" value="P:tRNA processing"/>
    <property type="evidence" value="ECO:0007669"/>
    <property type="project" value="UniProtKB-KW"/>
</dbReference>
<dbReference type="CDD" id="cd10845">
    <property type="entry name" value="DSRM_RNAse_III_family"/>
    <property type="match status" value="1"/>
</dbReference>
<dbReference type="CDD" id="cd00593">
    <property type="entry name" value="RIBOc"/>
    <property type="match status" value="1"/>
</dbReference>
<dbReference type="FunFam" id="1.10.1520.10:FF:000001">
    <property type="entry name" value="Ribonuclease 3"/>
    <property type="match status" value="1"/>
</dbReference>
<dbReference type="Gene3D" id="3.30.160.20">
    <property type="match status" value="1"/>
</dbReference>
<dbReference type="Gene3D" id="1.10.1520.10">
    <property type="entry name" value="Ribonuclease III domain"/>
    <property type="match status" value="1"/>
</dbReference>
<dbReference type="HAMAP" id="MF_00104">
    <property type="entry name" value="RNase_III"/>
    <property type="match status" value="1"/>
</dbReference>
<dbReference type="InterPro" id="IPR014720">
    <property type="entry name" value="dsRBD_dom"/>
</dbReference>
<dbReference type="InterPro" id="IPR011907">
    <property type="entry name" value="RNase_III"/>
</dbReference>
<dbReference type="InterPro" id="IPR000999">
    <property type="entry name" value="RNase_III_dom"/>
</dbReference>
<dbReference type="InterPro" id="IPR036389">
    <property type="entry name" value="RNase_III_sf"/>
</dbReference>
<dbReference type="NCBIfam" id="TIGR02191">
    <property type="entry name" value="RNaseIII"/>
    <property type="match status" value="1"/>
</dbReference>
<dbReference type="PANTHER" id="PTHR14950">
    <property type="entry name" value="DICER-RELATED"/>
    <property type="match status" value="1"/>
</dbReference>
<dbReference type="Pfam" id="PF00035">
    <property type="entry name" value="dsrm"/>
    <property type="match status" value="1"/>
</dbReference>
<dbReference type="Pfam" id="PF14622">
    <property type="entry name" value="Ribonucleas_3_3"/>
    <property type="match status" value="1"/>
</dbReference>
<dbReference type="SMART" id="SM00358">
    <property type="entry name" value="DSRM"/>
    <property type="match status" value="1"/>
</dbReference>
<dbReference type="SMART" id="SM00535">
    <property type="entry name" value="RIBOc"/>
    <property type="match status" value="1"/>
</dbReference>
<dbReference type="SUPFAM" id="SSF54768">
    <property type="entry name" value="dsRNA-binding domain-like"/>
    <property type="match status" value="1"/>
</dbReference>
<dbReference type="SUPFAM" id="SSF69065">
    <property type="entry name" value="RNase III domain-like"/>
    <property type="match status" value="1"/>
</dbReference>
<dbReference type="PROSITE" id="PS50137">
    <property type="entry name" value="DS_RBD"/>
    <property type="match status" value="1"/>
</dbReference>
<dbReference type="PROSITE" id="PS00517">
    <property type="entry name" value="RNASE_3_1"/>
    <property type="match status" value="1"/>
</dbReference>
<dbReference type="PROSITE" id="PS50142">
    <property type="entry name" value="RNASE_3_2"/>
    <property type="match status" value="1"/>
</dbReference>
<protein>
    <recommendedName>
        <fullName evidence="1">Ribonuclease 3</fullName>
        <ecNumber evidence="1">3.1.26.3</ecNumber>
    </recommendedName>
    <alternativeName>
        <fullName evidence="1">Ribonuclease III</fullName>
        <shortName evidence="1">RNase III</shortName>
    </alternativeName>
</protein>
<proteinExistence type="inferred from homology"/>
<name>RNC_PSYA2</name>
<evidence type="ECO:0000255" key="1">
    <source>
        <dbReference type="HAMAP-Rule" id="MF_00104"/>
    </source>
</evidence>
<comment type="function">
    <text evidence="1">Digests double-stranded RNA. Involved in the processing of primary rRNA transcript to yield the immediate precursors to the large and small rRNAs (23S and 16S). Processes some mRNAs, and tRNAs when they are encoded in the rRNA operon. Processes pre-crRNA and tracrRNA of type II CRISPR loci if present in the organism.</text>
</comment>
<comment type="catalytic activity">
    <reaction evidence="1">
        <text>Endonucleolytic cleavage to 5'-phosphomonoester.</text>
        <dbReference type="EC" id="3.1.26.3"/>
    </reaction>
</comment>
<comment type="cofactor">
    <cofactor evidence="1">
        <name>Mg(2+)</name>
        <dbReference type="ChEBI" id="CHEBI:18420"/>
    </cofactor>
</comment>
<comment type="subunit">
    <text evidence="1">Homodimer.</text>
</comment>
<comment type="subcellular location">
    <subcellularLocation>
        <location evidence="1">Cytoplasm</location>
    </subcellularLocation>
</comment>
<comment type="similarity">
    <text evidence="1">Belongs to the ribonuclease III family.</text>
</comment>
<organism>
    <name type="scientific">Psychrobacter arcticus (strain DSM 17307 / VKM B-2377 / 273-4)</name>
    <dbReference type="NCBI Taxonomy" id="259536"/>
    <lineage>
        <taxon>Bacteria</taxon>
        <taxon>Pseudomonadati</taxon>
        <taxon>Pseudomonadota</taxon>
        <taxon>Gammaproteobacteria</taxon>
        <taxon>Moraxellales</taxon>
        <taxon>Moraxellaceae</taxon>
        <taxon>Psychrobacter</taxon>
    </lineage>
</organism>
<gene>
    <name evidence="1" type="primary">rnc</name>
    <name type="ordered locus">Psyc_0333</name>
</gene>